<keyword id="KW-0997">Cell inner membrane</keyword>
<keyword id="KW-1003">Cell membrane</keyword>
<keyword id="KW-0249">Electron transport</keyword>
<keyword id="KW-0472">Membrane</keyword>
<keyword id="KW-1278">Translocase</keyword>
<keyword id="KW-0812">Transmembrane</keyword>
<keyword id="KW-1133">Transmembrane helix</keyword>
<keyword id="KW-0813">Transport</keyword>
<reference key="1">
    <citation type="journal article" date="2011" name="Proc. Natl. Acad. Sci. U.S.A.">
        <title>Genomic anatomy of Escherichia coli O157:H7 outbreaks.</title>
        <authorList>
            <person name="Eppinger M."/>
            <person name="Mammel M.K."/>
            <person name="Leclerc J.E."/>
            <person name="Ravel J."/>
            <person name="Cebula T.A."/>
        </authorList>
    </citation>
    <scope>NUCLEOTIDE SEQUENCE [LARGE SCALE GENOMIC DNA]</scope>
    <source>
        <strain>EC4115 / EHEC</strain>
    </source>
</reference>
<organism>
    <name type="scientific">Escherichia coli O157:H7 (strain EC4115 / EHEC)</name>
    <dbReference type="NCBI Taxonomy" id="444450"/>
    <lineage>
        <taxon>Bacteria</taxon>
        <taxon>Pseudomonadati</taxon>
        <taxon>Pseudomonadota</taxon>
        <taxon>Gammaproteobacteria</taxon>
        <taxon>Enterobacterales</taxon>
        <taxon>Enterobacteriaceae</taxon>
        <taxon>Escherichia</taxon>
    </lineage>
</organism>
<name>RSXA_ECO5E</name>
<comment type="function">
    <text evidence="1">Part of a membrane-bound complex that couples electron transfer with translocation of ions across the membrane. Required to maintain the reduced state of SoxR.</text>
</comment>
<comment type="subunit">
    <text evidence="1">The complex is composed of six subunits: RsxA, RsxB, RsxC, RsxD, RsxE and RsxG.</text>
</comment>
<comment type="subcellular location">
    <subcellularLocation>
        <location evidence="1">Cell inner membrane</location>
        <topology evidence="1">Multi-pass membrane protein</topology>
    </subcellularLocation>
</comment>
<comment type="similarity">
    <text evidence="1">Belongs to the NqrDE/RnfAE family.</text>
</comment>
<gene>
    <name evidence="1" type="primary">rsxA</name>
    <name type="synonym">rnfA</name>
    <name type="ordered locus">ECH74115_2339</name>
</gene>
<dbReference type="EC" id="7.-.-.-" evidence="1"/>
<dbReference type="EMBL" id="CP001164">
    <property type="protein sequence ID" value="ACI36520.1"/>
    <property type="molecule type" value="Genomic_DNA"/>
</dbReference>
<dbReference type="RefSeq" id="WP_000133193.1">
    <property type="nucleotide sequence ID" value="NC_011353.1"/>
</dbReference>
<dbReference type="SMR" id="B5Z461"/>
<dbReference type="GeneID" id="89516393"/>
<dbReference type="KEGG" id="ecf:ECH74115_2339"/>
<dbReference type="HOGENOM" id="CLU_095255_1_0_6"/>
<dbReference type="GO" id="GO:0005886">
    <property type="term" value="C:plasma membrane"/>
    <property type="evidence" value="ECO:0007669"/>
    <property type="project" value="UniProtKB-SubCell"/>
</dbReference>
<dbReference type="GO" id="GO:0022900">
    <property type="term" value="P:electron transport chain"/>
    <property type="evidence" value="ECO:0007669"/>
    <property type="project" value="UniProtKB-UniRule"/>
</dbReference>
<dbReference type="HAMAP" id="MF_00459">
    <property type="entry name" value="RsxA_RnfA"/>
    <property type="match status" value="1"/>
</dbReference>
<dbReference type="InterPro" id="IPR011293">
    <property type="entry name" value="Ion_transpt_RnfA/RsxA"/>
</dbReference>
<dbReference type="InterPro" id="IPR003667">
    <property type="entry name" value="NqrDE/RnfAE"/>
</dbReference>
<dbReference type="InterPro" id="IPR050133">
    <property type="entry name" value="NqrDE/RnfAE_oxidrdctase"/>
</dbReference>
<dbReference type="NCBIfam" id="NF003481">
    <property type="entry name" value="PRK05151.1"/>
    <property type="match status" value="1"/>
</dbReference>
<dbReference type="NCBIfam" id="TIGR01943">
    <property type="entry name" value="rnfA"/>
    <property type="match status" value="1"/>
</dbReference>
<dbReference type="PANTHER" id="PTHR30335">
    <property type="entry name" value="INTEGRAL MEMBRANE PROTEIN OF SOXR-REDUCING COMPLEX"/>
    <property type="match status" value="1"/>
</dbReference>
<dbReference type="PANTHER" id="PTHR30335:SF0">
    <property type="entry name" value="ION-TRANSLOCATING OXIDOREDUCTASE COMPLEX SUBUNIT A"/>
    <property type="match status" value="1"/>
</dbReference>
<dbReference type="Pfam" id="PF02508">
    <property type="entry name" value="Rnf-Nqr"/>
    <property type="match status" value="1"/>
</dbReference>
<dbReference type="PIRSF" id="PIRSF006102">
    <property type="entry name" value="NQR_DE"/>
    <property type="match status" value="1"/>
</dbReference>
<feature type="chain" id="PRO_1000191719" description="Ion-translocating oxidoreductase complex subunit A">
    <location>
        <begin position="1"/>
        <end position="193"/>
    </location>
</feature>
<feature type="transmembrane region" description="Helical" evidence="1">
    <location>
        <begin position="5"/>
        <end position="25"/>
    </location>
</feature>
<feature type="transmembrane region" description="Helical" evidence="1">
    <location>
        <begin position="39"/>
        <end position="59"/>
    </location>
</feature>
<feature type="transmembrane region" description="Helical" evidence="1">
    <location>
        <begin position="63"/>
        <end position="83"/>
    </location>
</feature>
<feature type="transmembrane region" description="Helical" evidence="1">
    <location>
        <begin position="102"/>
        <end position="122"/>
    </location>
</feature>
<feature type="transmembrane region" description="Helical" evidence="1">
    <location>
        <begin position="134"/>
        <end position="154"/>
    </location>
</feature>
<feature type="transmembrane region" description="Helical" evidence="1">
    <location>
        <begin position="171"/>
        <end position="191"/>
    </location>
</feature>
<sequence>MTDYLLLFVGTVLVNNFVLVKFLGLCPFMGVSKKLETAMGMGLATTFVMTLASICAWLIDTWILIPLNLIYLRTLAFILVIAVVVQFTEMVVRKTSPVLYRLLGIFLPLITTNCAVLGVALLNINLGHNFLQSALYGFSAAVGFSLVMVLFAAIRERLAVADVPAPFRGNAIALITAGLMSLAFMGFSGLVKL</sequence>
<proteinExistence type="inferred from homology"/>
<accession>B5Z461</accession>
<protein>
    <recommendedName>
        <fullName evidence="1">Ion-translocating oxidoreductase complex subunit A</fullName>
        <ecNumber evidence="1">7.-.-.-</ecNumber>
    </recommendedName>
    <alternativeName>
        <fullName evidence="1">Rsx electron transport complex subunit A</fullName>
    </alternativeName>
</protein>
<evidence type="ECO:0000255" key="1">
    <source>
        <dbReference type="HAMAP-Rule" id="MF_00459"/>
    </source>
</evidence>